<organismHost>
    <name type="scientific">Mycoplasma</name>
    <dbReference type="NCBI Taxonomy" id="2093"/>
</organismHost>
<name>YO08_BPL2</name>
<sequence length="64" mass="7413">MMKKYMIERDNKFFSSFGNDFDKKGRQKLKPIYSLKQNAVYFSSLSDAQITASRVQGKVIEIKG</sequence>
<protein>
    <recommendedName>
        <fullName>Uncharacterized 7.3 kDa protein</fullName>
    </recommendedName>
    <alternativeName>
        <fullName>ORF8</fullName>
    </alternativeName>
</protein>
<accession>P42543</accession>
<keyword id="KW-1185">Reference proteome</keyword>
<feature type="chain" id="PRO_0000066354" description="Uncharacterized 7.3 kDa protein">
    <location>
        <begin position="1"/>
        <end position="64"/>
    </location>
</feature>
<proteinExistence type="predicted"/>
<dbReference type="EMBL" id="L13696">
    <property type="protein sequence ID" value="AAA87964.1"/>
    <property type="molecule type" value="Genomic_DNA"/>
</dbReference>
<dbReference type="RefSeq" id="NP_040816.1">
    <property type="nucleotide sequence ID" value="NC_001447.1"/>
</dbReference>
<dbReference type="GeneID" id="1261013"/>
<dbReference type="KEGG" id="vg:1261013"/>
<dbReference type="Proteomes" id="UP000001573">
    <property type="component" value="Genome"/>
</dbReference>
<organism>
    <name type="scientific">Acholeplasma phage L2</name>
    <name type="common">Bacteriophage L2</name>
    <dbReference type="NCBI Taxonomy" id="46014"/>
    <lineage>
        <taxon>Viruses</taxon>
        <taxon>Viruses incertae sedis</taxon>
        <taxon>Plasmaviridae</taxon>
        <taxon>Plasmavirus</taxon>
    </lineage>
</organism>
<reference key="1">
    <citation type="journal article" date="1994" name="Gene">
        <title>Sequence analysis of a unique temperature phage: mycoplasma virus L2.</title>
        <authorList>
            <person name="Maniloff J."/>
            <person name="Kampo G.J."/>
            <person name="Dascher C.C."/>
        </authorList>
    </citation>
    <scope>NUCLEOTIDE SEQUENCE [LARGE SCALE GENOMIC DNA]</scope>
</reference>